<dbReference type="EMBL" id="CP001164">
    <property type="protein sequence ID" value="ACI39466.1"/>
    <property type="molecule type" value="Genomic_DNA"/>
</dbReference>
<dbReference type="RefSeq" id="WP_001135667.1">
    <property type="nucleotide sequence ID" value="NC_011353.1"/>
</dbReference>
<dbReference type="SMR" id="B5YWY1"/>
<dbReference type="KEGG" id="ecf:ECH74115_3326"/>
<dbReference type="HOGENOM" id="CLU_175457_0_0_6"/>
<dbReference type="FunFam" id="1.10.3390.10:FF:000001">
    <property type="entry name" value="UPF0352 protein YejL"/>
    <property type="match status" value="1"/>
</dbReference>
<dbReference type="Gene3D" id="1.10.3390.10">
    <property type="entry name" value="YejL-like"/>
    <property type="match status" value="1"/>
</dbReference>
<dbReference type="HAMAP" id="MF_00816">
    <property type="entry name" value="UPF0352"/>
    <property type="match status" value="1"/>
</dbReference>
<dbReference type="InterPro" id="IPR009857">
    <property type="entry name" value="UPF0352"/>
</dbReference>
<dbReference type="InterPro" id="IPR023202">
    <property type="entry name" value="YejL_sf"/>
</dbReference>
<dbReference type="NCBIfam" id="NF010242">
    <property type="entry name" value="PRK13689.1"/>
    <property type="match status" value="1"/>
</dbReference>
<dbReference type="Pfam" id="PF07208">
    <property type="entry name" value="DUF1414"/>
    <property type="match status" value="1"/>
</dbReference>
<dbReference type="PIRSF" id="PIRSF006188">
    <property type="entry name" value="UCP006188"/>
    <property type="match status" value="1"/>
</dbReference>
<dbReference type="SUPFAM" id="SSF158651">
    <property type="entry name" value="YejL-like"/>
    <property type="match status" value="1"/>
</dbReference>
<proteinExistence type="inferred from homology"/>
<feature type="chain" id="PRO_1000199585" description="UPF0352 protein YejL">
    <location>
        <begin position="1"/>
        <end position="75"/>
    </location>
</feature>
<sequence length="75" mass="8288">MPQISRYSDEQVEQLLAELLNVLEKHKAPTDLSLMVLGNMVTNLINTSIAPAQRQAIANSFARALQSSINEDKAH</sequence>
<name>YEJL_ECO5E</name>
<protein>
    <recommendedName>
        <fullName evidence="1">UPF0352 protein YejL</fullName>
    </recommendedName>
</protein>
<reference key="1">
    <citation type="journal article" date="2011" name="Proc. Natl. Acad. Sci. U.S.A.">
        <title>Genomic anatomy of Escherichia coli O157:H7 outbreaks.</title>
        <authorList>
            <person name="Eppinger M."/>
            <person name="Mammel M.K."/>
            <person name="Leclerc J.E."/>
            <person name="Ravel J."/>
            <person name="Cebula T.A."/>
        </authorList>
    </citation>
    <scope>NUCLEOTIDE SEQUENCE [LARGE SCALE GENOMIC DNA]</scope>
    <source>
        <strain>EC4115 / EHEC</strain>
    </source>
</reference>
<evidence type="ECO:0000255" key="1">
    <source>
        <dbReference type="HAMAP-Rule" id="MF_00816"/>
    </source>
</evidence>
<accession>B5YWY1</accession>
<gene>
    <name evidence="1" type="primary">yejL</name>
    <name type="ordered locus">ECH74115_3326</name>
</gene>
<organism>
    <name type="scientific">Escherichia coli O157:H7 (strain EC4115 / EHEC)</name>
    <dbReference type="NCBI Taxonomy" id="444450"/>
    <lineage>
        <taxon>Bacteria</taxon>
        <taxon>Pseudomonadati</taxon>
        <taxon>Pseudomonadota</taxon>
        <taxon>Gammaproteobacteria</taxon>
        <taxon>Enterobacterales</taxon>
        <taxon>Enterobacteriaceae</taxon>
        <taxon>Escherichia</taxon>
    </lineage>
</organism>
<comment type="similarity">
    <text evidence="1">Belongs to the UPF0352 family.</text>
</comment>